<keyword id="KW-0028">Amino-acid biosynthesis</keyword>
<keyword id="KW-0479">Metal-binding</keyword>
<keyword id="KW-0486">Methionine biosynthesis</keyword>
<keyword id="KW-0520">NAD</keyword>
<keyword id="KW-0521">NADP</keyword>
<keyword id="KW-0560">Oxidoreductase</keyword>
<keyword id="KW-1185">Reference proteome</keyword>
<keyword id="KW-0915">Sodium</keyword>
<keyword id="KW-0791">Threonine biosynthesis</keyword>
<protein>
    <recommendedName>
        <fullName>Homoserine dehydrogenase</fullName>
        <shortName>HDH</shortName>
        <shortName>HSD</shortName>
        <ecNumber evidence="3">1.1.1.3</ecNumber>
    </recommendedName>
</protein>
<accession>P9WPX0</accession>
<accession>L0T681</accession>
<accession>P63629</accession>
<accession>Q10601</accession>
<comment type="function">
    <text evidence="3">Catalyzes the conversion of L-aspartate-beta-semialdehyde (L-Asa) to L-homoserine (L-Hse), the third step in the biosynthesis of threonine and methionine from aspartate.</text>
</comment>
<comment type="catalytic activity">
    <reaction evidence="3">
        <text>L-homoserine + NADP(+) = L-aspartate 4-semialdehyde + NADPH + H(+)</text>
        <dbReference type="Rhea" id="RHEA:15761"/>
        <dbReference type="ChEBI" id="CHEBI:15378"/>
        <dbReference type="ChEBI" id="CHEBI:57476"/>
        <dbReference type="ChEBI" id="CHEBI:57783"/>
        <dbReference type="ChEBI" id="CHEBI:58349"/>
        <dbReference type="ChEBI" id="CHEBI:537519"/>
        <dbReference type="EC" id="1.1.1.3"/>
    </reaction>
    <physiologicalReaction direction="right-to-left" evidence="3">
        <dbReference type="Rhea" id="RHEA:15763"/>
    </physiologicalReaction>
</comment>
<comment type="catalytic activity">
    <reaction evidence="3">
        <text>L-homoserine + NAD(+) = L-aspartate 4-semialdehyde + NADH + H(+)</text>
        <dbReference type="Rhea" id="RHEA:15757"/>
        <dbReference type="ChEBI" id="CHEBI:15378"/>
        <dbReference type="ChEBI" id="CHEBI:57476"/>
        <dbReference type="ChEBI" id="CHEBI:57540"/>
        <dbReference type="ChEBI" id="CHEBI:57945"/>
        <dbReference type="ChEBI" id="CHEBI:537519"/>
        <dbReference type="EC" id="1.1.1.3"/>
    </reaction>
    <physiologicalReaction direction="right-to-left" evidence="3">
        <dbReference type="Rhea" id="RHEA:15759"/>
    </physiologicalReaction>
</comment>
<comment type="cofactor">
    <cofactor evidence="3">
        <name>a metal cation</name>
        <dbReference type="ChEBI" id="CHEBI:25213"/>
    </cofactor>
    <text evidence="3">A sodium ion is seen in the structure; a metal ion may subtly affect the relative position of the nucleotide-binding region to influence enzyme activity, and could increase the stability of the enzyme.</text>
</comment>
<comment type="pathway">
    <text evidence="3">Amino-acid biosynthesis; L-methionine biosynthesis via de novo pathway; L-homoserine from L-aspartate: step 3/3.</text>
</comment>
<comment type="pathway">
    <text evidence="3">Amino-acid biosynthesis; L-threonine biosynthesis; L-threonine from L-aspartate: step 3/5.</text>
</comment>
<comment type="similarity">
    <text evidence="6">Belongs to the homoserine dehydrogenase family.</text>
</comment>
<reference key="1">
    <citation type="journal article" date="2002" name="J. Bacteriol.">
        <title>Whole-genome comparison of Mycobacterium tuberculosis clinical and laboratory strains.</title>
        <authorList>
            <person name="Fleischmann R.D."/>
            <person name="Alland D."/>
            <person name="Eisen J.A."/>
            <person name="Carpenter L."/>
            <person name="White O."/>
            <person name="Peterson J.D."/>
            <person name="DeBoy R.T."/>
            <person name="Dodson R.J."/>
            <person name="Gwinn M.L."/>
            <person name="Haft D.H."/>
            <person name="Hickey E.K."/>
            <person name="Kolonay J.F."/>
            <person name="Nelson W.C."/>
            <person name="Umayam L.A."/>
            <person name="Ermolaeva M.D."/>
            <person name="Salzberg S.L."/>
            <person name="Delcher A."/>
            <person name="Utterback T.R."/>
            <person name="Weidman J.F."/>
            <person name="Khouri H.M."/>
            <person name="Gill J."/>
            <person name="Mikula A."/>
            <person name="Bishai W."/>
            <person name="Jacobs W.R. Jr."/>
            <person name="Venter J.C."/>
            <person name="Fraser C.M."/>
        </authorList>
    </citation>
    <scope>NUCLEOTIDE SEQUENCE [LARGE SCALE GENOMIC DNA]</scope>
    <source>
        <strain>CDC 1551 / Oshkosh</strain>
    </source>
</reference>
<name>DHOM_MYCTO</name>
<evidence type="ECO:0000250" key="1">
    <source>
        <dbReference type="UniProtKB" id="F9VNG5"/>
    </source>
</evidence>
<evidence type="ECO:0000250" key="2">
    <source>
        <dbReference type="UniProtKB" id="O58802"/>
    </source>
</evidence>
<evidence type="ECO:0000250" key="3">
    <source>
        <dbReference type="UniProtKB" id="P31116"/>
    </source>
</evidence>
<evidence type="ECO:0000255" key="4"/>
<evidence type="ECO:0000255" key="5">
    <source>
        <dbReference type="PROSITE-ProRule" id="PRU01007"/>
    </source>
</evidence>
<evidence type="ECO:0000305" key="6"/>
<dbReference type="EC" id="1.1.1.3" evidence="3"/>
<dbReference type="EMBL" id="AE000516">
    <property type="protein sequence ID" value="AAK45595.1"/>
    <property type="molecule type" value="Genomic_DNA"/>
</dbReference>
<dbReference type="PIR" id="B70773">
    <property type="entry name" value="B70773"/>
</dbReference>
<dbReference type="RefSeq" id="WP_003406648.1">
    <property type="nucleotide sequence ID" value="NZ_KK341227.1"/>
</dbReference>
<dbReference type="SMR" id="P9WPX0"/>
<dbReference type="KEGG" id="mtc:MT1333"/>
<dbReference type="PATRIC" id="fig|83331.31.peg.1439"/>
<dbReference type="HOGENOM" id="CLU_009116_1_0_11"/>
<dbReference type="UniPathway" id="UPA00050">
    <property type="reaction ID" value="UER00063"/>
</dbReference>
<dbReference type="UniPathway" id="UPA00051">
    <property type="reaction ID" value="UER00465"/>
</dbReference>
<dbReference type="Proteomes" id="UP000001020">
    <property type="component" value="Chromosome"/>
</dbReference>
<dbReference type="GO" id="GO:0004412">
    <property type="term" value="F:homoserine dehydrogenase activity"/>
    <property type="evidence" value="ECO:0000250"/>
    <property type="project" value="UniProtKB"/>
</dbReference>
<dbReference type="GO" id="GO:0046872">
    <property type="term" value="F:metal ion binding"/>
    <property type="evidence" value="ECO:0007669"/>
    <property type="project" value="UniProtKB-KW"/>
</dbReference>
<dbReference type="GO" id="GO:0070403">
    <property type="term" value="F:NAD+ binding"/>
    <property type="evidence" value="ECO:0000250"/>
    <property type="project" value="UniProtKB"/>
</dbReference>
<dbReference type="GO" id="GO:0050661">
    <property type="term" value="F:NADP binding"/>
    <property type="evidence" value="ECO:0007669"/>
    <property type="project" value="InterPro"/>
</dbReference>
<dbReference type="GO" id="GO:0009086">
    <property type="term" value="P:methionine biosynthetic process"/>
    <property type="evidence" value="ECO:0000250"/>
    <property type="project" value="UniProtKB"/>
</dbReference>
<dbReference type="GO" id="GO:0009088">
    <property type="term" value="P:threonine biosynthetic process"/>
    <property type="evidence" value="ECO:0000250"/>
    <property type="project" value="UniProtKB"/>
</dbReference>
<dbReference type="CDD" id="cd04881">
    <property type="entry name" value="ACT_HSDH-Hom"/>
    <property type="match status" value="1"/>
</dbReference>
<dbReference type="FunFam" id="3.30.360.10:FF:000005">
    <property type="entry name" value="Homoserine dehydrogenase"/>
    <property type="match status" value="1"/>
</dbReference>
<dbReference type="FunFam" id="3.40.50.720:FF:000062">
    <property type="entry name" value="Homoserine dehydrogenase"/>
    <property type="match status" value="1"/>
</dbReference>
<dbReference type="Gene3D" id="3.30.70.260">
    <property type="match status" value="1"/>
</dbReference>
<dbReference type="Gene3D" id="3.30.360.10">
    <property type="entry name" value="Dihydrodipicolinate Reductase, domain 2"/>
    <property type="match status" value="1"/>
</dbReference>
<dbReference type="Gene3D" id="3.40.50.720">
    <property type="entry name" value="NAD(P)-binding Rossmann-like Domain"/>
    <property type="match status" value="1"/>
</dbReference>
<dbReference type="InterPro" id="IPR045865">
    <property type="entry name" value="ACT-like_dom_sf"/>
</dbReference>
<dbReference type="InterPro" id="IPR002912">
    <property type="entry name" value="ACT_dom"/>
</dbReference>
<dbReference type="InterPro" id="IPR005106">
    <property type="entry name" value="Asp/hSer_DH_NAD-bd"/>
</dbReference>
<dbReference type="InterPro" id="IPR016204">
    <property type="entry name" value="HDH"/>
</dbReference>
<dbReference type="InterPro" id="IPR001342">
    <property type="entry name" value="HDH_cat"/>
</dbReference>
<dbReference type="InterPro" id="IPR019811">
    <property type="entry name" value="HDH_CS"/>
</dbReference>
<dbReference type="InterPro" id="IPR036291">
    <property type="entry name" value="NAD(P)-bd_dom_sf"/>
</dbReference>
<dbReference type="NCBIfam" id="NF004976">
    <property type="entry name" value="PRK06349.1"/>
    <property type="match status" value="1"/>
</dbReference>
<dbReference type="PANTHER" id="PTHR43331">
    <property type="entry name" value="HOMOSERINE DEHYDROGENASE"/>
    <property type="match status" value="1"/>
</dbReference>
<dbReference type="PANTHER" id="PTHR43331:SF1">
    <property type="entry name" value="HOMOSERINE DEHYDROGENASE"/>
    <property type="match status" value="1"/>
</dbReference>
<dbReference type="Pfam" id="PF01842">
    <property type="entry name" value="ACT"/>
    <property type="match status" value="1"/>
</dbReference>
<dbReference type="Pfam" id="PF00742">
    <property type="entry name" value="Homoserine_dh"/>
    <property type="match status" value="1"/>
</dbReference>
<dbReference type="Pfam" id="PF03447">
    <property type="entry name" value="NAD_binding_3"/>
    <property type="match status" value="1"/>
</dbReference>
<dbReference type="PIRSF" id="PIRSF000098">
    <property type="entry name" value="Homoser_dehydrog"/>
    <property type="match status" value="1"/>
</dbReference>
<dbReference type="SUPFAM" id="SSF55021">
    <property type="entry name" value="ACT-like"/>
    <property type="match status" value="1"/>
</dbReference>
<dbReference type="SUPFAM" id="SSF55347">
    <property type="entry name" value="Glyceraldehyde-3-phosphate dehydrogenase-like, C-terminal domain"/>
    <property type="match status" value="1"/>
</dbReference>
<dbReference type="SUPFAM" id="SSF51735">
    <property type="entry name" value="NAD(P)-binding Rossmann-fold domains"/>
    <property type="match status" value="1"/>
</dbReference>
<dbReference type="PROSITE" id="PS51671">
    <property type="entry name" value="ACT"/>
    <property type="match status" value="1"/>
</dbReference>
<dbReference type="PROSITE" id="PS01042">
    <property type="entry name" value="HOMOSER_DHGENASE"/>
    <property type="match status" value="1"/>
</dbReference>
<organism>
    <name type="scientific">Mycobacterium tuberculosis (strain CDC 1551 / Oshkosh)</name>
    <dbReference type="NCBI Taxonomy" id="83331"/>
    <lineage>
        <taxon>Bacteria</taxon>
        <taxon>Bacillati</taxon>
        <taxon>Actinomycetota</taxon>
        <taxon>Actinomycetes</taxon>
        <taxon>Mycobacteriales</taxon>
        <taxon>Mycobacteriaceae</taxon>
        <taxon>Mycobacterium</taxon>
        <taxon>Mycobacterium tuberculosis complex</taxon>
    </lineage>
</organism>
<feature type="chain" id="PRO_0000426878" description="Homoserine dehydrogenase">
    <location>
        <begin position="1"/>
        <end position="441"/>
    </location>
</feature>
<feature type="domain" description="ACT" evidence="5">
    <location>
        <begin position="356"/>
        <end position="435"/>
    </location>
</feature>
<feature type="active site" description="Proton donor" evidence="4">
    <location>
        <position position="207"/>
    </location>
</feature>
<feature type="binding site" evidence="1">
    <location>
        <position position="17"/>
    </location>
    <ligand>
        <name>NADP(+)</name>
        <dbReference type="ChEBI" id="CHEBI:58349"/>
    </ligand>
</feature>
<feature type="binding site" evidence="3">
    <location>
        <position position="18"/>
    </location>
    <ligand>
        <name>NAD(+)</name>
        <dbReference type="ChEBI" id="CHEBI:57540"/>
    </ligand>
</feature>
<feature type="binding site" evidence="1">
    <location>
        <position position="18"/>
    </location>
    <ligand>
        <name>NADP(+)</name>
        <dbReference type="ChEBI" id="CHEBI:58349"/>
    </ligand>
</feature>
<feature type="binding site" evidence="2">
    <location>
        <position position="18"/>
    </location>
    <ligand>
        <name>NADPH</name>
        <dbReference type="ChEBI" id="CHEBI:57783"/>
    </ligand>
</feature>
<feature type="binding site" evidence="3">
    <location>
        <position position="37"/>
    </location>
    <ligand>
        <name>NAD(+)</name>
        <dbReference type="ChEBI" id="CHEBI:57540"/>
    </ligand>
</feature>
<feature type="binding site" evidence="3">
    <location>
        <position position="47"/>
    </location>
    <ligand>
        <name>NAD(+)</name>
        <dbReference type="ChEBI" id="CHEBI:57540"/>
    </ligand>
</feature>
<feature type="binding site" evidence="1">
    <location>
        <position position="49"/>
    </location>
    <ligand>
        <name>NADP(+)</name>
        <dbReference type="ChEBI" id="CHEBI:58349"/>
    </ligand>
</feature>
<feature type="binding site" evidence="2">
    <location>
        <position position="49"/>
    </location>
    <ligand>
        <name>NADPH</name>
        <dbReference type="ChEBI" id="CHEBI:57783"/>
    </ligand>
</feature>
<feature type="binding site" evidence="1">
    <location>
        <position position="50"/>
    </location>
    <ligand>
        <name>NADP(+)</name>
        <dbReference type="ChEBI" id="CHEBI:58349"/>
    </ligand>
</feature>
<feature type="binding site" evidence="1">
    <location>
        <position position="107"/>
    </location>
    <ligand>
        <name>NADP(+)</name>
        <dbReference type="ChEBI" id="CHEBI:58349"/>
    </ligand>
</feature>
<feature type="binding site" evidence="2">
    <location>
        <position position="107"/>
    </location>
    <ligand>
        <name>NADPH</name>
        <dbReference type="ChEBI" id="CHEBI:57783"/>
    </ligand>
</feature>
<feature type="binding site" evidence="3">
    <location>
        <position position="131"/>
    </location>
    <ligand>
        <name>Na(+)</name>
        <dbReference type="ChEBI" id="CHEBI:29101"/>
    </ligand>
</feature>
<feature type="binding site" evidence="3">
    <location>
        <position position="134"/>
    </location>
    <ligand>
        <name>Na(+)</name>
        <dbReference type="ChEBI" id="CHEBI:29101"/>
    </ligand>
</feature>
<feature type="binding site" evidence="3">
    <location>
        <position position="136"/>
    </location>
    <ligand>
        <name>Na(+)</name>
        <dbReference type="ChEBI" id="CHEBI:29101"/>
    </ligand>
</feature>
<feature type="binding site" evidence="3">
    <location>
        <position position="138"/>
    </location>
    <ligand>
        <name>Na(+)</name>
        <dbReference type="ChEBI" id="CHEBI:29101"/>
    </ligand>
</feature>
<feature type="binding site" evidence="1">
    <location>
        <position position="189"/>
    </location>
    <ligand>
        <name>NADP(+)</name>
        <dbReference type="ChEBI" id="CHEBI:58349"/>
    </ligand>
</feature>
<feature type="binding site" evidence="3">
    <location>
        <position position="192"/>
    </location>
    <ligand>
        <name>L-homoserine</name>
        <dbReference type="ChEBI" id="CHEBI:57476"/>
    </ligand>
</feature>
<feature type="binding site" evidence="1">
    <location>
        <position position="192"/>
    </location>
    <ligand>
        <name>NADP(+)</name>
        <dbReference type="ChEBI" id="CHEBI:58349"/>
    </ligand>
</feature>
<feature type="binding site" evidence="3">
    <location>
        <position position="203"/>
    </location>
    <ligand>
        <name>L-homoserine</name>
        <dbReference type="ChEBI" id="CHEBI:57476"/>
    </ligand>
</feature>
<feature type="binding site" evidence="3">
    <location>
        <position position="309"/>
    </location>
    <ligand>
        <name>NAD(+)</name>
        <dbReference type="ChEBI" id="CHEBI:57540"/>
    </ligand>
</feature>
<feature type="binding site" evidence="1">
    <location>
        <position position="309"/>
    </location>
    <ligand>
        <name>NADP(+)</name>
        <dbReference type="ChEBI" id="CHEBI:58349"/>
    </ligand>
</feature>
<feature type="binding site" evidence="2">
    <location>
        <position position="309"/>
    </location>
    <ligand>
        <name>NADPH</name>
        <dbReference type="ChEBI" id="CHEBI:57783"/>
    </ligand>
</feature>
<sequence>MPGDEKPVGVAVLGLGNVGSEVVRIIENSAEDLAARVGAPLVLRGIGVRRVTTDRGVPIELLTDDIEELVAREDVDIVVEVMGPVEPSRKAILGALERGKSVVTANKALLATSTGELAQAAESAHVDLYFEAAVAGAIPVIRPLTQSLAGDTVLRVAGIVNGTTNYILSAMDSTGADYASALADASALGYAEADPTADVEGYDAAAKAAILASIAFHTRVTADDVYREGITKVTPADFGSAHALGCTIKLLSICERITTDEGSQRVSARVYPALVPLSHPLAAVNGAFNAVVVEAEAAGRLMFYGQGAGGAPTASAVTGDLVMAARNRVLGSRGPRESKYAQLPVAPMGFIETRYYVSMNVADKPGVLSAVAAEFAKREVSIAEVRQEGVVDEGGRRVGARIVVVTHLATDAALSETVDALDDLDVVQGVSSVIRLEGTGL</sequence>
<gene>
    <name type="primary">hom</name>
    <name type="synonym">thrA</name>
    <name type="ordered locus">MT1333</name>
</gene>
<proteinExistence type="inferred from homology"/>